<dbReference type="EMBL" id="U00090">
    <property type="protein sequence ID" value="AAB92465.1"/>
    <property type="molecule type" value="Genomic_DNA"/>
</dbReference>
<dbReference type="RefSeq" id="NP_444037.1">
    <property type="nucleotide sequence ID" value="NC_000914.2"/>
</dbReference>
<dbReference type="RefSeq" id="WP_010875222.1">
    <property type="nucleotide sequence ID" value="NC_000914.2"/>
</dbReference>
<dbReference type="KEGG" id="rhi:NGR_a01880"/>
<dbReference type="PATRIC" id="fig|394.7.peg.187"/>
<dbReference type="eggNOG" id="COG0517">
    <property type="taxonomic scope" value="Bacteria"/>
</dbReference>
<dbReference type="HOGENOM" id="CLU_038153_1_0_5"/>
<dbReference type="OrthoDB" id="6979325at2"/>
<dbReference type="Proteomes" id="UP000001054">
    <property type="component" value="Plasmid pNGR234a"/>
</dbReference>
<dbReference type="GO" id="GO:0003677">
    <property type="term" value="F:DNA binding"/>
    <property type="evidence" value="ECO:0007669"/>
    <property type="project" value="UniProtKB-KW"/>
</dbReference>
<dbReference type="GO" id="GO:0004803">
    <property type="term" value="F:transposase activity"/>
    <property type="evidence" value="ECO:0007669"/>
    <property type="project" value="InterPro"/>
</dbReference>
<dbReference type="GO" id="GO:0006313">
    <property type="term" value="P:DNA transposition"/>
    <property type="evidence" value="ECO:0007669"/>
    <property type="project" value="InterPro"/>
</dbReference>
<dbReference type="InterPro" id="IPR054832">
    <property type="entry name" value="transpos_IS91"/>
</dbReference>
<dbReference type="InterPro" id="IPR007069">
    <property type="entry name" value="Transposase_32"/>
</dbReference>
<dbReference type="InterPro" id="IPR026889">
    <property type="entry name" value="Zn_Tnp"/>
</dbReference>
<dbReference type="NCBIfam" id="NF033538">
    <property type="entry name" value="transpos_IS91"/>
    <property type="match status" value="1"/>
</dbReference>
<dbReference type="PANTHER" id="PTHR37023:SF1">
    <property type="entry name" value="ISSOD25 TRANSPOSASE TNPA_ISSOD25"/>
    <property type="match status" value="1"/>
</dbReference>
<dbReference type="PANTHER" id="PTHR37023">
    <property type="entry name" value="TRANSPOSASE"/>
    <property type="match status" value="1"/>
</dbReference>
<dbReference type="Pfam" id="PF04986">
    <property type="entry name" value="Y2_Tnp"/>
    <property type="match status" value="1"/>
</dbReference>
<dbReference type="Pfam" id="PF14319">
    <property type="entry name" value="Zn_Tnp_IS91"/>
    <property type="match status" value="1"/>
</dbReference>
<protein>
    <recommendedName>
        <fullName>Putative transposase y4qJ</fullName>
    </recommendedName>
</protein>
<sequence>MARSGPEVADIFRRYGEAYRAQHTSLSTAQRRVMTAIELCRTAALGGHVEACDQCGHRRIAFNSCRDRHCPRCQSLARAQWLEDRRAELLETQYFHVVFTLPEAIAAIAYQNKALVYGLLFRATAETLRTIAADPRHLGAEIGFFAVLHTWGQNLLHHPHLHCVVPGGGFSPDGTQWIACKPGFFLPVRVLSRLFRRLFLEHLEKAFDGGKLQFFSDLRALNERNAFRRYLAPLRKAEWVVFAKPPFAGPEQVLDYVGRYTHRVAISNNRLVDIEDGAVRFRWKDYRHGDRQKVMTVSTDEFIRRFLLHVLPEGFHRIRYYGFLGNRYREQKLAQCRDLLGMSVPAPSETQAPKEYRDRYEELTGRSLRQCPACHQGQMITIEIFDGVTGPPRCWDTS</sequence>
<reference key="1">
    <citation type="journal article" date="1997" name="Nature">
        <title>Molecular basis of symbiosis between Rhizobium and legumes.</title>
        <authorList>
            <person name="Freiberg C.A."/>
            <person name="Fellay R."/>
            <person name="Bairoch A."/>
            <person name="Broughton W.J."/>
            <person name="Rosenthal A."/>
            <person name="Perret X."/>
        </authorList>
    </citation>
    <scope>NUCLEOTIDE SEQUENCE [LARGE SCALE GENOMIC DNA]</scope>
    <source>
        <strain>NBRC 101917 / NGR234</strain>
    </source>
</reference>
<reference key="2">
    <citation type="journal article" date="2009" name="Appl. Environ. Microbiol.">
        <title>Rhizobium sp. strain NGR234 possesses a remarkable number of secretion systems.</title>
        <authorList>
            <person name="Schmeisser C."/>
            <person name="Liesegang H."/>
            <person name="Krysciak D."/>
            <person name="Bakkou N."/>
            <person name="Le Quere A."/>
            <person name="Wollherr A."/>
            <person name="Heinemeyer I."/>
            <person name="Morgenstern B."/>
            <person name="Pommerening-Roeser A."/>
            <person name="Flores M."/>
            <person name="Palacios R."/>
            <person name="Brenner S."/>
            <person name="Gottschalk G."/>
            <person name="Schmitz R.A."/>
            <person name="Broughton W.J."/>
            <person name="Perret X."/>
            <person name="Strittmatter A.W."/>
            <person name="Streit W.R."/>
        </authorList>
    </citation>
    <scope>NUCLEOTIDE SEQUENCE [LARGE SCALE GENOMIC DNA]</scope>
    <source>
        <strain>NBRC 101917 / NGR234</strain>
    </source>
</reference>
<accession>P55631</accession>
<comment type="similarity">
    <text evidence="1">Belongs to the transposase 32 family.</text>
</comment>
<feature type="chain" id="PRO_0000075449" description="Putative transposase y4qJ">
    <location>
        <begin position="1"/>
        <end position="398"/>
    </location>
</feature>
<name>Y4QJ_SINFN</name>
<keyword id="KW-0233">DNA recombination</keyword>
<keyword id="KW-0238">DNA-binding</keyword>
<keyword id="KW-0614">Plasmid</keyword>
<keyword id="KW-1185">Reference proteome</keyword>
<keyword id="KW-0814">Transposable element</keyword>
<keyword id="KW-0815">Transposition</keyword>
<gene>
    <name type="ordered locus">NGR_a01880</name>
    <name type="ORF">y4qJ</name>
</gene>
<geneLocation type="plasmid">
    <name>sym pNGR234a</name>
</geneLocation>
<proteinExistence type="inferred from homology"/>
<evidence type="ECO:0000305" key="1"/>
<organism>
    <name type="scientific">Sinorhizobium fredii (strain NBRC 101917 / NGR234)</name>
    <dbReference type="NCBI Taxonomy" id="394"/>
    <lineage>
        <taxon>Bacteria</taxon>
        <taxon>Pseudomonadati</taxon>
        <taxon>Pseudomonadota</taxon>
        <taxon>Alphaproteobacteria</taxon>
        <taxon>Hyphomicrobiales</taxon>
        <taxon>Rhizobiaceae</taxon>
        <taxon>Sinorhizobium/Ensifer group</taxon>
        <taxon>Sinorhizobium</taxon>
    </lineage>
</organism>